<evidence type="ECO:0000250" key="1">
    <source>
        <dbReference type="UniProtKB" id="P0DRE8"/>
    </source>
</evidence>
<evidence type="ECO:0000255" key="2">
    <source>
        <dbReference type="PROSITE-ProRule" id="PRU01209"/>
    </source>
</evidence>
<evidence type="ECO:0000269" key="3">
    <source>
    </source>
</evidence>
<evidence type="ECO:0000269" key="4">
    <source>
    </source>
</evidence>
<evidence type="ECO:0000269" key="5">
    <source>
    </source>
</evidence>
<evidence type="ECO:0000303" key="6">
    <source>
    </source>
</evidence>
<evidence type="ECO:0000305" key="7"/>
<evidence type="ECO:0000305" key="8">
    <source>
    </source>
</evidence>
<evidence type="ECO:0000305" key="9">
    <source>
    </source>
</evidence>
<evidence type="ECO:0000305" key="10">
    <source>
    </source>
</evidence>
<feature type="chain" id="PRO_0000274675" description="Potassium channel toxin Tst-beta-KTx" evidence="3 4">
    <location>
        <begin position="1"/>
        <end position="60"/>
    </location>
</feature>
<feature type="peptide" id="PRO_0000461724" description="Cryptide Pep-3" evidence="1">
    <location>
        <begin position="5"/>
        <end position="14"/>
    </location>
</feature>
<feature type="domain" description="BetaSPN-type CS-alpha/beta" evidence="2">
    <location>
        <begin position="26"/>
        <end position="60"/>
    </location>
</feature>
<feature type="disulfide bond" evidence="2">
    <location>
        <begin position="29"/>
        <end position="50"/>
    </location>
</feature>
<feature type="disulfide bond" evidence="2">
    <location>
        <begin position="36"/>
        <end position="55"/>
    </location>
</feature>
<feature type="disulfide bond" evidence="2">
    <location>
        <begin position="40"/>
        <end position="57"/>
    </location>
</feature>
<name>KBX1_TITST</name>
<organism>
    <name type="scientific">Tityus stigmurus</name>
    <name type="common">Brazilian scorpion</name>
    <dbReference type="NCBI Taxonomy" id="50344"/>
    <lineage>
        <taxon>Eukaryota</taxon>
        <taxon>Metazoa</taxon>
        <taxon>Ecdysozoa</taxon>
        <taxon>Arthropoda</taxon>
        <taxon>Chelicerata</taxon>
        <taxon>Arachnida</taxon>
        <taxon>Scorpiones</taxon>
        <taxon>Buthida</taxon>
        <taxon>Buthoidea</taxon>
        <taxon>Buthidae</taxon>
        <taxon>Tityus</taxon>
    </lineage>
</organism>
<protein>
    <recommendedName>
        <fullName evidence="8">Potassium channel toxin Tst-beta-KTx</fullName>
        <shortName evidence="6">TstbetaKTx</shortName>
    </recommendedName>
    <component>
        <recommendedName>
            <fullName evidence="1">Cryptide Pep-3</fullName>
        </recommendedName>
    </component>
</protein>
<sequence>KLVALIPNDQLRSILKAVVHKVAKTQFGCPAYEGYCNDHCNDIERKDGECHGFKCKCAKD</sequence>
<keyword id="KW-0903">Direct protein sequencing</keyword>
<keyword id="KW-1015">Disulfide bond</keyword>
<keyword id="KW-0872">Ion channel impairing toxin</keyword>
<keyword id="KW-0528">Neurotoxin</keyword>
<keyword id="KW-0632">Potassium channel impairing toxin</keyword>
<keyword id="KW-0964">Secreted</keyword>
<keyword id="KW-0800">Toxin</keyword>
<keyword id="KW-1220">Voltage-gated potassium channel impairing toxin</keyword>
<dbReference type="SMR" id="P0C2F3"/>
<dbReference type="GO" id="GO:0005576">
    <property type="term" value="C:extracellular region"/>
    <property type="evidence" value="ECO:0007669"/>
    <property type="project" value="UniProtKB-SubCell"/>
</dbReference>
<dbReference type="GO" id="GO:0015459">
    <property type="term" value="F:potassium channel regulator activity"/>
    <property type="evidence" value="ECO:0007669"/>
    <property type="project" value="UniProtKB-KW"/>
</dbReference>
<dbReference type="GO" id="GO:0090729">
    <property type="term" value="F:toxin activity"/>
    <property type="evidence" value="ECO:0007669"/>
    <property type="project" value="UniProtKB-KW"/>
</dbReference>
<dbReference type="InterPro" id="IPR029237">
    <property type="entry name" value="Long_scorpion_toxin_alpha/beta"/>
</dbReference>
<dbReference type="Pfam" id="PF14866">
    <property type="entry name" value="Scorpion_toxin_alpha-beta"/>
    <property type="match status" value="1"/>
</dbReference>
<dbReference type="PROSITE" id="PS51862">
    <property type="entry name" value="BSPN_CSAB"/>
    <property type="match status" value="1"/>
</dbReference>
<comment type="function">
    <text evidence="5">Inhibits voltage-gated potassium channels Kv1.1/KCNA1, Kv1.2/KCNA2, and Kv1.3/KCNA3.</text>
</comment>
<comment type="function">
    <molecule>Cryptide Pep-3</molecule>
    <text evidence="1">Does not induce hemolytic activity, lactate dehydrogenase (LDH) release from mast cells, mast cell degranulation, and antimicrobial effects. In vivo, injection into mice causes moderate edema formation, but induces very weak or no change in nociceptive sensibility. It also reduces mice locomotion, suggesting an increase in anxiety, but causes no alteration in rearing (standing on hind limbs).</text>
</comment>
<comment type="subcellular location">
    <subcellularLocation>
        <location evidence="3 4">Secreted</location>
    </subcellularLocation>
</comment>
<comment type="tissue specificity">
    <text evidence="8 9">Expressed by the venom gland.</text>
</comment>
<comment type="mass spectrometry"/>
<comment type="miscellaneous">
    <text evidence="7">The primary structure of this cryptide Pep-3 is identical to that of cryptide Pep-3 from other Tityus species (AC P0DRE8, AC P69940, AC Q5G8A6).</text>
</comment>
<comment type="miscellaneous">
    <text evidence="10">Negative results: does not inhibit Kv1.4/KCNA4, Kv1.5/KCNA5, Kv1.6/KCNA6, Shaker IR and Kv11.1/KCNH2 potassium channels. Does not show cytolytic activity (PubMed:18030427).</text>
</comment>
<comment type="similarity">
    <text evidence="7">Belongs to the long chain scorpion toxin family. Class 1 subfamily.</text>
</comment>
<accession>P0C2F3</accession>
<proteinExistence type="evidence at protein level"/>
<reference key="1">
    <citation type="journal article" date="2007" name="Comp. Biochem. Physiol.">
        <title>Proteomic analysis of the venom from the scorpion Tityus stigmurus: biochemical and physiological comparison with other Tityus species.</title>
        <authorList>
            <person name="Batista C.V.F."/>
            <person name="Roman-Gonzalez S.A."/>
            <person name="Salas-Castillo S.P."/>
            <person name="Zamudio F.Z."/>
            <person name="Gomez-Lagunas F."/>
            <person name="Possani L.D."/>
        </authorList>
    </citation>
    <scope>PROTEIN SEQUENCE</scope>
    <scope>MASS SPECTROMETRY</scope>
    <scope>SUBCELLULAR LOCATION</scope>
    <source>
        <tissue>Venom</tissue>
    </source>
</reference>
<reference key="2">
    <citation type="journal article" date="2007" name="Peptides">
        <title>Wide phylogenetic distribution of scorpine and long-chain beta-KTx-like peptides in scorpion venoms: identification of 'orphan' components.</title>
        <authorList>
            <person name="Diego-Garcia E."/>
            <person name="Schwartz E.F."/>
            <person name="D'Suze G."/>
            <person name="Gonzalez S.A."/>
            <person name="Batista C.V."/>
            <person name="Garcia B.I."/>
            <person name="Rodriguez de la Vega R.C."/>
            <person name="Possani L.D."/>
        </authorList>
    </citation>
    <scope>PROTEIN SEQUENCE</scope>
    <scope>MASS SPECTROMETRY</scope>
    <scope>SUBCELLULAR LOCATION</scope>
    <source>
        <tissue>Venom</tissue>
    </source>
</reference>
<reference key="3">
    <citation type="journal article" date="2008" name="Cell. Mol. Life Sci.">
        <title>Cytolytic and K+ channel blocking activities of beta-KTx and scorpine-like peptides purified from scorpion venoms.</title>
        <authorList>
            <person name="Diego-Garcia E."/>
            <person name="Abdel-Mottaleb Y."/>
            <person name="Schwartz E.F."/>
            <person name="Rodriguez de la Vega R.C."/>
            <person name="Tytgat J."/>
            <person name="Possani L.D."/>
        </authorList>
    </citation>
    <scope>FUNCTION</scope>
</reference>